<sequence>MKKNLQIAIDGPAGAGKSTIAKAIARQLGFFYVDTGAMYRAIAYKALRLNIALTQEEEIAGMARQTEITLEHSAARRVFCDGLDVTEAIRSPEVSRSVSIIAAYPEVRERLVELQRQEAGQGGVVMDGRDIGTYVLPDADLKIFLTASSEERARRRWLELQRAGKELSLAEVQRDMDARDHYDQQRAVSPLIPAADAILLDTTGLQIEEIVDRILSLFNDKVETGYVRSQNQ</sequence>
<name>KCY_DESHY</name>
<proteinExistence type="inferred from homology"/>
<gene>
    <name evidence="1" type="primary">cmk</name>
    <name type="ordered locus">DSY2257</name>
</gene>
<organism>
    <name type="scientific">Desulfitobacterium hafniense (strain Y51)</name>
    <dbReference type="NCBI Taxonomy" id="138119"/>
    <lineage>
        <taxon>Bacteria</taxon>
        <taxon>Bacillati</taxon>
        <taxon>Bacillota</taxon>
        <taxon>Clostridia</taxon>
        <taxon>Eubacteriales</taxon>
        <taxon>Desulfitobacteriaceae</taxon>
        <taxon>Desulfitobacterium</taxon>
    </lineage>
</organism>
<keyword id="KW-0067">ATP-binding</keyword>
<keyword id="KW-0963">Cytoplasm</keyword>
<keyword id="KW-0418">Kinase</keyword>
<keyword id="KW-0547">Nucleotide-binding</keyword>
<keyword id="KW-1185">Reference proteome</keyword>
<keyword id="KW-0808">Transferase</keyword>
<comment type="catalytic activity">
    <reaction evidence="1">
        <text>CMP + ATP = CDP + ADP</text>
        <dbReference type="Rhea" id="RHEA:11600"/>
        <dbReference type="ChEBI" id="CHEBI:30616"/>
        <dbReference type="ChEBI" id="CHEBI:58069"/>
        <dbReference type="ChEBI" id="CHEBI:60377"/>
        <dbReference type="ChEBI" id="CHEBI:456216"/>
        <dbReference type="EC" id="2.7.4.25"/>
    </reaction>
</comment>
<comment type="catalytic activity">
    <reaction evidence="1">
        <text>dCMP + ATP = dCDP + ADP</text>
        <dbReference type="Rhea" id="RHEA:25094"/>
        <dbReference type="ChEBI" id="CHEBI:30616"/>
        <dbReference type="ChEBI" id="CHEBI:57566"/>
        <dbReference type="ChEBI" id="CHEBI:58593"/>
        <dbReference type="ChEBI" id="CHEBI:456216"/>
        <dbReference type="EC" id="2.7.4.25"/>
    </reaction>
</comment>
<comment type="subcellular location">
    <subcellularLocation>
        <location evidence="1">Cytoplasm</location>
    </subcellularLocation>
</comment>
<comment type="similarity">
    <text evidence="1">Belongs to the cytidylate kinase family. Type 1 subfamily.</text>
</comment>
<protein>
    <recommendedName>
        <fullName evidence="1">Cytidylate kinase</fullName>
        <shortName evidence="1">CK</shortName>
        <ecNumber evidence="1">2.7.4.25</ecNumber>
    </recommendedName>
    <alternativeName>
        <fullName evidence="1">Cytidine monophosphate kinase</fullName>
        <shortName evidence="1">CMP kinase</shortName>
    </alternativeName>
</protein>
<feature type="chain" id="PRO_1000048215" description="Cytidylate kinase">
    <location>
        <begin position="1"/>
        <end position="232"/>
    </location>
</feature>
<feature type="binding site" evidence="1">
    <location>
        <begin position="11"/>
        <end position="19"/>
    </location>
    <ligand>
        <name>ATP</name>
        <dbReference type="ChEBI" id="CHEBI:30616"/>
    </ligand>
</feature>
<accession>Q24V96</accession>
<dbReference type="EC" id="2.7.4.25" evidence="1"/>
<dbReference type="EMBL" id="AP008230">
    <property type="protein sequence ID" value="BAE84046.1"/>
    <property type="molecule type" value="Genomic_DNA"/>
</dbReference>
<dbReference type="RefSeq" id="WP_011460204.1">
    <property type="nucleotide sequence ID" value="NC_007907.1"/>
</dbReference>
<dbReference type="SMR" id="Q24V96"/>
<dbReference type="STRING" id="138119.DSY2257"/>
<dbReference type="KEGG" id="dsy:DSY2257"/>
<dbReference type="eggNOG" id="COG0283">
    <property type="taxonomic scope" value="Bacteria"/>
</dbReference>
<dbReference type="HOGENOM" id="CLU_079959_0_2_9"/>
<dbReference type="Proteomes" id="UP000001946">
    <property type="component" value="Chromosome"/>
</dbReference>
<dbReference type="GO" id="GO:0005829">
    <property type="term" value="C:cytosol"/>
    <property type="evidence" value="ECO:0007669"/>
    <property type="project" value="TreeGrafter"/>
</dbReference>
<dbReference type="GO" id="GO:0005524">
    <property type="term" value="F:ATP binding"/>
    <property type="evidence" value="ECO:0007669"/>
    <property type="project" value="UniProtKB-UniRule"/>
</dbReference>
<dbReference type="GO" id="GO:0036430">
    <property type="term" value="F:CMP kinase activity"/>
    <property type="evidence" value="ECO:0007669"/>
    <property type="project" value="RHEA"/>
</dbReference>
<dbReference type="GO" id="GO:0036431">
    <property type="term" value="F:dCMP kinase activity"/>
    <property type="evidence" value="ECO:0007669"/>
    <property type="project" value="RHEA"/>
</dbReference>
<dbReference type="GO" id="GO:0015949">
    <property type="term" value="P:nucleobase-containing small molecule interconversion"/>
    <property type="evidence" value="ECO:0007669"/>
    <property type="project" value="TreeGrafter"/>
</dbReference>
<dbReference type="GO" id="GO:0006220">
    <property type="term" value="P:pyrimidine nucleotide metabolic process"/>
    <property type="evidence" value="ECO:0007669"/>
    <property type="project" value="UniProtKB-UniRule"/>
</dbReference>
<dbReference type="CDD" id="cd02020">
    <property type="entry name" value="CMPK"/>
    <property type="match status" value="1"/>
</dbReference>
<dbReference type="Gene3D" id="3.40.50.300">
    <property type="entry name" value="P-loop containing nucleotide triphosphate hydrolases"/>
    <property type="match status" value="1"/>
</dbReference>
<dbReference type="HAMAP" id="MF_00238">
    <property type="entry name" value="Cytidyl_kinase_type1"/>
    <property type="match status" value="1"/>
</dbReference>
<dbReference type="InterPro" id="IPR003136">
    <property type="entry name" value="Cytidylate_kin"/>
</dbReference>
<dbReference type="InterPro" id="IPR011994">
    <property type="entry name" value="Cytidylate_kinase_dom"/>
</dbReference>
<dbReference type="InterPro" id="IPR027417">
    <property type="entry name" value="P-loop_NTPase"/>
</dbReference>
<dbReference type="NCBIfam" id="TIGR00017">
    <property type="entry name" value="cmk"/>
    <property type="match status" value="1"/>
</dbReference>
<dbReference type="PANTHER" id="PTHR21299:SF2">
    <property type="entry name" value="CYTIDYLATE KINASE"/>
    <property type="match status" value="1"/>
</dbReference>
<dbReference type="PANTHER" id="PTHR21299">
    <property type="entry name" value="CYTIDYLATE KINASE/PANTOATE-BETA-ALANINE LIGASE"/>
    <property type="match status" value="1"/>
</dbReference>
<dbReference type="Pfam" id="PF02224">
    <property type="entry name" value="Cytidylate_kin"/>
    <property type="match status" value="1"/>
</dbReference>
<dbReference type="SUPFAM" id="SSF52540">
    <property type="entry name" value="P-loop containing nucleoside triphosphate hydrolases"/>
    <property type="match status" value="1"/>
</dbReference>
<evidence type="ECO:0000255" key="1">
    <source>
        <dbReference type="HAMAP-Rule" id="MF_00238"/>
    </source>
</evidence>
<reference key="1">
    <citation type="journal article" date="2006" name="J. Bacteriol.">
        <title>Complete genome sequence of the dehalorespiring bacterium Desulfitobacterium hafniense Y51 and comparison with Dehalococcoides ethenogenes 195.</title>
        <authorList>
            <person name="Nonaka H."/>
            <person name="Keresztes G."/>
            <person name="Shinoda Y."/>
            <person name="Ikenaga Y."/>
            <person name="Abe M."/>
            <person name="Naito K."/>
            <person name="Inatomi K."/>
            <person name="Furukawa K."/>
            <person name="Inui M."/>
            <person name="Yukawa H."/>
        </authorList>
    </citation>
    <scope>NUCLEOTIDE SEQUENCE [LARGE SCALE GENOMIC DNA]</scope>
    <source>
        <strain>Y51</strain>
    </source>
</reference>